<organism>
    <name type="scientific">Danio rerio</name>
    <name type="common">Zebrafish</name>
    <name type="synonym">Brachydanio rerio</name>
    <dbReference type="NCBI Taxonomy" id="7955"/>
    <lineage>
        <taxon>Eukaryota</taxon>
        <taxon>Metazoa</taxon>
        <taxon>Chordata</taxon>
        <taxon>Craniata</taxon>
        <taxon>Vertebrata</taxon>
        <taxon>Euteleostomi</taxon>
        <taxon>Actinopterygii</taxon>
        <taxon>Neopterygii</taxon>
        <taxon>Teleostei</taxon>
        <taxon>Ostariophysi</taxon>
        <taxon>Cypriniformes</taxon>
        <taxon>Danionidae</taxon>
        <taxon>Danioninae</taxon>
        <taxon>Danio</taxon>
    </lineage>
</organism>
<feature type="signal peptide" evidence="1">
    <location>
        <begin position="1"/>
        <end position="23"/>
    </location>
</feature>
<feature type="chain" id="PRO_0000349214" description="Fin bud initiation factor">
    <location>
        <begin position="24"/>
        <end position="210"/>
    </location>
</feature>
<feature type="coiled-coil region" evidence="2">
    <location>
        <begin position="133"/>
        <end position="157"/>
    </location>
</feature>
<feature type="glycosylation site" description="N-linked (GlcNAc...) asparagine" evidence="2">
    <location>
        <position position="35"/>
    </location>
</feature>
<feature type="disulfide bond" description="Interchain" evidence="1">
    <location>
        <position position="57"/>
    </location>
</feature>
<feature type="disulfide bond" description="Interchain" evidence="1">
    <location>
        <position position="69"/>
    </location>
</feature>
<proteinExistence type="evidence at transcript level"/>
<reference key="1">
    <citation type="journal article" date="2007" name="Dev. Biol.">
        <title>Fibin, a novel secreted lateral plate mesoderm signal, is essential for pectoral fin bud initiation in zebrafish.</title>
        <authorList>
            <person name="Wakahara T."/>
            <person name="Kusu N."/>
            <person name="Yamauchi H."/>
            <person name="Kimura I."/>
            <person name="Konishi M."/>
            <person name="Miyake A."/>
            <person name="Itoh N."/>
        </authorList>
    </citation>
    <scope>NUCLEOTIDE SEQUENCE [MRNA]</scope>
    <scope>FUNCTION</scope>
    <scope>SUBCELLULAR LOCATION</scope>
    <scope>DEVELOPMENTAL STAGE</scope>
    <source>
        <tissue>Embryo</tissue>
    </source>
</reference>
<reference key="2">
    <citation type="submission" date="2005-04" db="EMBL/GenBank/DDBJ databases">
        <authorList>
            <consortium name="NIH - Zebrafish Gene Collection (ZGC) project"/>
        </authorList>
    </citation>
    <scope>NUCLEOTIDE SEQUENCE [LARGE SCALE MRNA]</scope>
    <source>
        <tissue>Embryo</tissue>
    </source>
</reference>
<evidence type="ECO:0000250" key="1"/>
<evidence type="ECO:0000255" key="2"/>
<evidence type="ECO:0000269" key="3">
    <source>
    </source>
</evidence>
<evidence type="ECO:0000305" key="4"/>
<name>FIBIN_DANRE</name>
<sequence length="210" mass="24229">MGTMASPLFILIACLLSMRVGGAFFAGPLYPEMSNGTFHHYFVPDGYYEENDDPEKCQMLFKMMDNRKCTLDEDQDSVIRDDFTIIKRHIEDAARVLEGIGKSISFDLDGEDSYGKYLRRETTQISEAFSNSEKSLLELEVKFKQSQENELKEEHKISDDFLNMIVHTRDVLKETLDISLGLKDKHELLSLIIRSHGTRLSRLKNDYMKV</sequence>
<keyword id="KW-0175">Coiled coil</keyword>
<keyword id="KW-0217">Developmental protein</keyword>
<keyword id="KW-1015">Disulfide bond</keyword>
<keyword id="KW-0256">Endoplasmic reticulum</keyword>
<keyword id="KW-0325">Glycoprotein</keyword>
<keyword id="KW-0333">Golgi apparatus</keyword>
<keyword id="KW-1185">Reference proteome</keyword>
<keyword id="KW-0964">Secreted</keyword>
<keyword id="KW-0732">Signal</keyword>
<dbReference type="EMBL" id="AB236894">
    <property type="protein sequence ID" value="BAF42656.1"/>
    <property type="molecule type" value="mRNA"/>
</dbReference>
<dbReference type="EMBL" id="BC092975">
    <property type="protein sequence ID" value="AAH92975.1"/>
    <property type="status" value="ALT_INIT"/>
    <property type="molecule type" value="mRNA"/>
</dbReference>
<dbReference type="RefSeq" id="NP_001017873.2">
    <property type="nucleotide sequence ID" value="NM_001017873.2"/>
</dbReference>
<dbReference type="FunCoup" id="A1IGX5">
    <property type="interactions" value="1266"/>
</dbReference>
<dbReference type="STRING" id="7955.ENSDARP00000112062"/>
<dbReference type="GlyCosmos" id="A1IGX5">
    <property type="glycosylation" value="1 site, No reported glycans"/>
</dbReference>
<dbReference type="PaxDb" id="7955-ENSDARP00000112062"/>
<dbReference type="Ensembl" id="ENSDART00000123498">
    <property type="protein sequence ID" value="ENSDARP00000112062"/>
    <property type="gene ID" value="ENSDARG00000087196"/>
</dbReference>
<dbReference type="Ensembl" id="ENSDART00000187497">
    <property type="protein sequence ID" value="ENSDARP00000151620"/>
    <property type="gene ID" value="ENSDARG00000110737"/>
</dbReference>
<dbReference type="GeneID" id="550571"/>
<dbReference type="KEGG" id="dre:550571"/>
<dbReference type="AGR" id="ZFIN:ZDB-GENE-050417-423"/>
<dbReference type="CTD" id="550571"/>
<dbReference type="ZFIN" id="ZDB-GENE-050417-423">
    <property type="gene designation" value="fibinb"/>
</dbReference>
<dbReference type="eggNOG" id="ENOG502QSW0">
    <property type="taxonomic scope" value="Eukaryota"/>
</dbReference>
<dbReference type="HOGENOM" id="CLU_1323584_0_0_1"/>
<dbReference type="InParanoid" id="A1IGX5"/>
<dbReference type="OMA" id="CHGYFDG"/>
<dbReference type="OrthoDB" id="9434858at2759"/>
<dbReference type="PhylomeDB" id="A1IGX5"/>
<dbReference type="TreeFam" id="TF331989"/>
<dbReference type="PRO" id="PR:A1IGX5"/>
<dbReference type="Proteomes" id="UP000000437">
    <property type="component" value="Alternate scaffold 7"/>
</dbReference>
<dbReference type="Proteomes" id="UP000000437">
    <property type="component" value="Chromosome 7"/>
</dbReference>
<dbReference type="Bgee" id="ENSDARG00000087196">
    <property type="expression patterns" value="Expressed in tail bud paraxial mesoderm and 22 other cell types or tissues"/>
</dbReference>
<dbReference type="GO" id="GO:0005783">
    <property type="term" value="C:endoplasmic reticulum"/>
    <property type="evidence" value="ECO:0007669"/>
    <property type="project" value="UniProtKB-SubCell"/>
</dbReference>
<dbReference type="GO" id="GO:0005576">
    <property type="term" value="C:extracellular region"/>
    <property type="evidence" value="ECO:0007669"/>
    <property type="project" value="UniProtKB-SubCell"/>
</dbReference>
<dbReference type="GO" id="GO:0005794">
    <property type="term" value="C:Golgi apparatus"/>
    <property type="evidence" value="ECO:0000250"/>
    <property type="project" value="ZFIN"/>
</dbReference>
<dbReference type="GO" id="GO:0035118">
    <property type="term" value="P:embryonic pectoral fin morphogenesis"/>
    <property type="evidence" value="ECO:0000315"/>
    <property type="project" value="ZFIN"/>
</dbReference>
<dbReference type="InterPro" id="IPR026772">
    <property type="entry name" value="Fibin"/>
</dbReference>
<dbReference type="PANTHER" id="PTHR31185">
    <property type="entry name" value="FIN BUD INITIATION FACTOR FIBIN"/>
    <property type="match status" value="1"/>
</dbReference>
<dbReference type="PANTHER" id="PTHR31185:SF0">
    <property type="entry name" value="FIN BUD INITIATION FACTOR HOMOLOG"/>
    <property type="match status" value="1"/>
</dbReference>
<dbReference type="Pfam" id="PF15819">
    <property type="entry name" value="Fibin"/>
    <property type="match status" value="1"/>
</dbReference>
<protein>
    <recommendedName>
        <fullName>Fin bud initiation factor</fullName>
    </recommendedName>
</protein>
<gene>
    <name type="primary">fibin</name>
    <name type="ORF">zgc:110676</name>
</gene>
<comment type="function">
    <text evidence="3">Essential for the initiation of pectoral fin bud formation. Potentially acts downstream of retinoic acid and Wnt signaling and is required for tbx5 expression in the lateral plate mesoderm of presumptive pectoral fin bud regions.</text>
</comment>
<comment type="subunit">
    <text evidence="1">Homodimer; disulfide-linked. Seems to also exist as monomers (By similarity).</text>
</comment>
<comment type="subcellular location">
    <subcellularLocation>
        <location evidence="1">Endoplasmic reticulum</location>
    </subcellularLocation>
    <subcellularLocation>
        <location evidence="3">Secreted</location>
    </subcellularLocation>
    <subcellularLocation>
        <location evidence="3">Golgi apparatus</location>
    </subcellularLocation>
</comment>
<comment type="developmental stage">
    <text evidence="3">First detected in the notochord at 10 hours post fertilization (hpf). At 12 and 14 hpf (the 6- and 10-somite stages), expressed in the notochord, somites and tail. At 14 hpf, also expressed in the forebrain and the lateral plate mesoderm anterior to somite 1. At 18 and 24 hpf, predominantly expressed in the tail, presumptive pectoral fin bud regions and the alar plate of the hindbrain.</text>
</comment>
<comment type="similarity">
    <text evidence="4">Belongs to the FIBIN family.</text>
</comment>
<comment type="sequence caution" evidence="4">
    <conflict type="erroneous initiation">
        <sequence resource="EMBL-CDS" id="AAH92975"/>
    </conflict>
</comment>
<accession>A1IGX5</accession>
<accession>Q567Y0</accession>